<sequence>MEQVVIVDAIRTPMGRSKGGAFRNVRAEDLSAHLMRSLLARNPALEAAALDDIYWGCVQQTLEQGFNIARNAALLAEVPHSVPAVTVNRLCGSSMQALHDAARMIMTGDAQACLVGGVEHMGHVPMSHGVDFHPGLSRNVAKAAGMMGLTTEMLARMHGISREMQDAFAARSHARAWAATQSGAFKNEIIPTGGHDADGVLKQFNYDEVIRPETTVEALATLRPAFDPVSGTVTAGTSSALSDGAAAMLVMSESRARELGLKPRARVRSMAVVGCDPSIMGYGPVPASKLALKKAGLSASDIGVFEMNEAFAAQILPCIKDLGLMEQIDEKINLNGGAIALGHPLGCSGARISTTLLNLMEHKDVQFGLATMCIGLGQGIATVFERV</sequence>
<comment type="function">
    <text evidence="1">Catalyzes the final step of fatty acid oxidation in which acetyl-CoA is released and the CoA ester of a fatty acid two carbons shorter is formed.</text>
</comment>
<comment type="catalytic activity">
    <reaction evidence="1">
        <text>an acyl-CoA + acetyl-CoA = a 3-oxoacyl-CoA + CoA</text>
        <dbReference type="Rhea" id="RHEA:21564"/>
        <dbReference type="ChEBI" id="CHEBI:57287"/>
        <dbReference type="ChEBI" id="CHEBI:57288"/>
        <dbReference type="ChEBI" id="CHEBI:58342"/>
        <dbReference type="ChEBI" id="CHEBI:90726"/>
        <dbReference type="EC" id="2.3.1.16"/>
    </reaction>
</comment>
<comment type="pathway">
    <text evidence="1">Lipid metabolism; fatty acid beta-oxidation.</text>
</comment>
<comment type="subunit">
    <text evidence="1">Heterotetramer of two alpha chains (FadB) and two beta chains (FadA).</text>
</comment>
<comment type="subcellular location">
    <subcellularLocation>
        <location evidence="1">Cytoplasm</location>
    </subcellularLocation>
</comment>
<comment type="similarity">
    <text evidence="1">Belongs to the thiolase-like superfamily. Thiolase family.</text>
</comment>
<keyword id="KW-0012">Acyltransferase</keyword>
<keyword id="KW-0963">Cytoplasm</keyword>
<keyword id="KW-0276">Fatty acid metabolism</keyword>
<keyword id="KW-0442">Lipid degradation</keyword>
<keyword id="KW-0443">Lipid metabolism</keyword>
<keyword id="KW-0808">Transferase</keyword>
<evidence type="ECO:0000255" key="1">
    <source>
        <dbReference type="HAMAP-Rule" id="MF_01620"/>
    </source>
</evidence>
<dbReference type="EC" id="2.3.1.16" evidence="1"/>
<dbReference type="EMBL" id="CP000243">
    <property type="protein sequence ID" value="ABE09847.1"/>
    <property type="molecule type" value="Genomic_DNA"/>
</dbReference>
<dbReference type="RefSeq" id="WP_000438759.1">
    <property type="nucleotide sequence ID" value="NZ_CP064825.1"/>
</dbReference>
<dbReference type="SMR" id="Q1R467"/>
<dbReference type="KEGG" id="eci:UTI89_C4430"/>
<dbReference type="HOGENOM" id="CLU_031026_2_3_6"/>
<dbReference type="UniPathway" id="UPA00659"/>
<dbReference type="Proteomes" id="UP000001952">
    <property type="component" value="Chromosome"/>
</dbReference>
<dbReference type="GO" id="GO:0005737">
    <property type="term" value="C:cytoplasm"/>
    <property type="evidence" value="ECO:0007669"/>
    <property type="project" value="UniProtKB-SubCell"/>
</dbReference>
<dbReference type="GO" id="GO:0003988">
    <property type="term" value="F:acetyl-CoA C-acyltransferase activity"/>
    <property type="evidence" value="ECO:0007669"/>
    <property type="project" value="UniProtKB-UniRule"/>
</dbReference>
<dbReference type="GO" id="GO:0006635">
    <property type="term" value="P:fatty acid beta-oxidation"/>
    <property type="evidence" value="ECO:0007669"/>
    <property type="project" value="UniProtKB-UniRule"/>
</dbReference>
<dbReference type="GO" id="GO:0010124">
    <property type="term" value="P:phenylacetate catabolic process"/>
    <property type="evidence" value="ECO:0007669"/>
    <property type="project" value="TreeGrafter"/>
</dbReference>
<dbReference type="CDD" id="cd00751">
    <property type="entry name" value="thiolase"/>
    <property type="match status" value="1"/>
</dbReference>
<dbReference type="FunFam" id="3.40.47.10:FF:000010">
    <property type="entry name" value="Acetyl-CoA acetyltransferase (Thiolase)"/>
    <property type="match status" value="1"/>
</dbReference>
<dbReference type="Gene3D" id="3.40.47.10">
    <property type="match status" value="2"/>
</dbReference>
<dbReference type="HAMAP" id="MF_01620">
    <property type="entry name" value="FadA"/>
    <property type="match status" value="1"/>
</dbReference>
<dbReference type="InterPro" id="IPR012805">
    <property type="entry name" value="FadA"/>
</dbReference>
<dbReference type="InterPro" id="IPR002155">
    <property type="entry name" value="Thiolase"/>
</dbReference>
<dbReference type="InterPro" id="IPR016039">
    <property type="entry name" value="Thiolase-like"/>
</dbReference>
<dbReference type="InterPro" id="IPR050215">
    <property type="entry name" value="Thiolase-like_sf_Thiolase"/>
</dbReference>
<dbReference type="InterPro" id="IPR020615">
    <property type="entry name" value="Thiolase_acyl_enz_int_AS"/>
</dbReference>
<dbReference type="InterPro" id="IPR020610">
    <property type="entry name" value="Thiolase_AS"/>
</dbReference>
<dbReference type="InterPro" id="IPR020617">
    <property type="entry name" value="Thiolase_C"/>
</dbReference>
<dbReference type="InterPro" id="IPR020613">
    <property type="entry name" value="Thiolase_CS"/>
</dbReference>
<dbReference type="InterPro" id="IPR020616">
    <property type="entry name" value="Thiolase_N"/>
</dbReference>
<dbReference type="NCBIfam" id="TIGR01930">
    <property type="entry name" value="AcCoA-C-Actrans"/>
    <property type="match status" value="1"/>
</dbReference>
<dbReference type="NCBIfam" id="TIGR02445">
    <property type="entry name" value="fadA"/>
    <property type="match status" value="1"/>
</dbReference>
<dbReference type="NCBIfam" id="NF006510">
    <property type="entry name" value="PRK08947.1"/>
    <property type="match status" value="1"/>
</dbReference>
<dbReference type="PANTHER" id="PTHR43853:SF11">
    <property type="entry name" value="3-KETOACYL-COA THIOLASE FADA"/>
    <property type="match status" value="1"/>
</dbReference>
<dbReference type="PANTHER" id="PTHR43853">
    <property type="entry name" value="3-KETOACYL-COA THIOLASE, PEROXISOMAL"/>
    <property type="match status" value="1"/>
</dbReference>
<dbReference type="Pfam" id="PF02803">
    <property type="entry name" value="Thiolase_C"/>
    <property type="match status" value="1"/>
</dbReference>
<dbReference type="Pfam" id="PF00108">
    <property type="entry name" value="Thiolase_N"/>
    <property type="match status" value="1"/>
</dbReference>
<dbReference type="PIRSF" id="PIRSF000429">
    <property type="entry name" value="Ac-CoA_Ac_transf"/>
    <property type="match status" value="1"/>
</dbReference>
<dbReference type="SUPFAM" id="SSF53901">
    <property type="entry name" value="Thiolase-like"/>
    <property type="match status" value="2"/>
</dbReference>
<dbReference type="PROSITE" id="PS00098">
    <property type="entry name" value="THIOLASE_1"/>
    <property type="match status" value="1"/>
</dbReference>
<dbReference type="PROSITE" id="PS00737">
    <property type="entry name" value="THIOLASE_2"/>
    <property type="match status" value="1"/>
</dbReference>
<dbReference type="PROSITE" id="PS00099">
    <property type="entry name" value="THIOLASE_3"/>
    <property type="match status" value="1"/>
</dbReference>
<reference key="1">
    <citation type="journal article" date="2006" name="Proc. Natl. Acad. Sci. U.S.A.">
        <title>Identification of genes subject to positive selection in uropathogenic strains of Escherichia coli: a comparative genomics approach.</title>
        <authorList>
            <person name="Chen S.L."/>
            <person name="Hung C.-S."/>
            <person name="Xu J."/>
            <person name="Reigstad C.S."/>
            <person name="Magrini V."/>
            <person name="Sabo A."/>
            <person name="Blasiar D."/>
            <person name="Bieri T."/>
            <person name="Meyer R.R."/>
            <person name="Ozersky P."/>
            <person name="Armstrong J.R."/>
            <person name="Fulton R.S."/>
            <person name="Latreille J.P."/>
            <person name="Spieth J."/>
            <person name="Hooton T.M."/>
            <person name="Mardis E.R."/>
            <person name="Hultgren S.J."/>
            <person name="Gordon J.I."/>
        </authorList>
    </citation>
    <scope>NUCLEOTIDE SEQUENCE [LARGE SCALE GENOMIC DNA]</scope>
    <source>
        <strain>UTI89 / UPEC</strain>
    </source>
</reference>
<gene>
    <name evidence="1" type="primary">fadA</name>
    <name type="ordered locus">UTI89_C4430</name>
</gene>
<accession>Q1R467</accession>
<name>FADA_ECOUT</name>
<organism>
    <name type="scientific">Escherichia coli (strain UTI89 / UPEC)</name>
    <dbReference type="NCBI Taxonomy" id="364106"/>
    <lineage>
        <taxon>Bacteria</taxon>
        <taxon>Pseudomonadati</taxon>
        <taxon>Pseudomonadota</taxon>
        <taxon>Gammaproteobacteria</taxon>
        <taxon>Enterobacterales</taxon>
        <taxon>Enterobacteriaceae</taxon>
        <taxon>Escherichia</taxon>
    </lineage>
</organism>
<proteinExistence type="inferred from homology"/>
<protein>
    <recommendedName>
        <fullName evidence="1">3-ketoacyl-CoA thiolase</fullName>
        <ecNumber evidence="1">2.3.1.16</ecNumber>
    </recommendedName>
    <alternativeName>
        <fullName evidence="1">Acetyl-CoA acyltransferase</fullName>
    </alternativeName>
    <alternativeName>
        <fullName evidence="1">Beta-ketothiolase</fullName>
    </alternativeName>
    <alternativeName>
        <fullName evidence="1">Fatty acid oxidation complex subunit beta</fullName>
    </alternativeName>
</protein>
<feature type="chain" id="PRO_0000292888" description="3-ketoacyl-CoA thiolase">
    <location>
        <begin position="1"/>
        <end position="387"/>
    </location>
</feature>
<feature type="active site" description="Acyl-thioester intermediate" evidence="1">
    <location>
        <position position="91"/>
    </location>
</feature>
<feature type="active site" description="Proton acceptor" evidence="1">
    <location>
        <position position="343"/>
    </location>
</feature>
<feature type="active site" description="Proton acceptor" evidence="1">
    <location>
        <position position="373"/>
    </location>
</feature>